<feature type="chain" id="PRO_0000429080" description="Transducer protein Htr8">
    <location>
        <begin position="1"/>
        <end position="643"/>
    </location>
</feature>
<feature type="transmembrane region" description="Helical" evidence="2">
    <location>
        <begin position="48"/>
        <end position="68"/>
    </location>
</feature>
<feature type="transmembrane region" description="Helical" evidence="2">
    <location>
        <begin position="79"/>
        <end position="99"/>
    </location>
</feature>
<feature type="transmembrane region" description="Helical" evidence="2">
    <location>
        <begin position="115"/>
        <end position="134"/>
    </location>
</feature>
<feature type="transmembrane region" description="Helical" evidence="2">
    <location>
        <begin position="149"/>
        <end position="169"/>
    </location>
</feature>
<feature type="transmembrane region" description="Helical" evidence="2">
    <location>
        <begin position="184"/>
        <end position="204"/>
    </location>
</feature>
<feature type="domain" description="HAMP" evidence="3">
    <location>
        <begin position="273"/>
        <end position="326"/>
    </location>
</feature>
<feature type="domain" description="Methyl-accepting transducer" evidence="4">
    <location>
        <begin position="345"/>
        <end position="581"/>
    </location>
</feature>
<accession>B0R5T0</accession>
<dbReference type="EMBL" id="AM774415">
    <property type="protein sequence ID" value="CAP14097.1"/>
    <property type="molecule type" value="Genomic_DNA"/>
</dbReference>
<dbReference type="RefSeq" id="WP_010903109.1">
    <property type="nucleotide sequence ID" value="NC_010364.1"/>
</dbReference>
<dbReference type="SMR" id="B0R5T0"/>
<dbReference type="EnsemblBacteria" id="CAP14097">
    <property type="protein sequence ID" value="CAP14097"/>
    <property type="gene ID" value="OE_3167F"/>
</dbReference>
<dbReference type="GeneID" id="89349807"/>
<dbReference type="KEGG" id="hsl:OE_3167F"/>
<dbReference type="HOGENOM" id="CLU_000445_107_18_2"/>
<dbReference type="PhylomeDB" id="B0R5T0"/>
<dbReference type="Proteomes" id="UP000001321">
    <property type="component" value="Chromosome"/>
</dbReference>
<dbReference type="GO" id="GO:0005886">
    <property type="term" value="C:plasma membrane"/>
    <property type="evidence" value="ECO:0007669"/>
    <property type="project" value="UniProtKB-SubCell"/>
</dbReference>
<dbReference type="GO" id="GO:0004888">
    <property type="term" value="F:transmembrane signaling receptor activity"/>
    <property type="evidence" value="ECO:0007669"/>
    <property type="project" value="InterPro"/>
</dbReference>
<dbReference type="GO" id="GO:0006935">
    <property type="term" value="P:chemotaxis"/>
    <property type="evidence" value="ECO:0007669"/>
    <property type="project" value="UniProtKB-KW"/>
</dbReference>
<dbReference type="GO" id="GO:0007165">
    <property type="term" value="P:signal transduction"/>
    <property type="evidence" value="ECO:0007669"/>
    <property type="project" value="UniProtKB-KW"/>
</dbReference>
<dbReference type="CDD" id="cd06225">
    <property type="entry name" value="HAMP"/>
    <property type="match status" value="1"/>
</dbReference>
<dbReference type="CDD" id="cd11386">
    <property type="entry name" value="MCP_signal"/>
    <property type="match status" value="1"/>
</dbReference>
<dbReference type="Gene3D" id="1.10.287.950">
    <property type="entry name" value="Methyl-accepting chemotaxis protein"/>
    <property type="match status" value="1"/>
</dbReference>
<dbReference type="InterPro" id="IPR004090">
    <property type="entry name" value="Chemotax_Me-accpt_rcpt"/>
</dbReference>
<dbReference type="InterPro" id="IPR003660">
    <property type="entry name" value="HAMP_dom"/>
</dbReference>
<dbReference type="InterPro" id="IPR004089">
    <property type="entry name" value="MCPsignal_dom"/>
</dbReference>
<dbReference type="PANTHER" id="PTHR32089:SF112">
    <property type="entry name" value="LYSOZYME-LIKE PROTEIN-RELATED"/>
    <property type="match status" value="1"/>
</dbReference>
<dbReference type="PANTHER" id="PTHR32089">
    <property type="entry name" value="METHYL-ACCEPTING CHEMOTAXIS PROTEIN MCPB"/>
    <property type="match status" value="1"/>
</dbReference>
<dbReference type="Pfam" id="PF00015">
    <property type="entry name" value="MCPsignal"/>
    <property type="match status" value="1"/>
</dbReference>
<dbReference type="PRINTS" id="PR00260">
    <property type="entry name" value="CHEMTRNSDUCR"/>
</dbReference>
<dbReference type="SMART" id="SM00304">
    <property type="entry name" value="HAMP"/>
    <property type="match status" value="2"/>
</dbReference>
<dbReference type="SMART" id="SM00283">
    <property type="entry name" value="MA"/>
    <property type="match status" value="1"/>
</dbReference>
<dbReference type="SUPFAM" id="SSF58104">
    <property type="entry name" value="Methyl-accepting chemotaxis protein (MCP) signaling domain"/>
    <property type="match status" value="1"/>
</dbReference>
<dbReference type="PROSITE" id="PS50111">
    <property type="entry name" value="CHEMOTAXIS_TRANSDUC_2"/>
    <property type="match status" value="1"/>
</dbReference>
<dbReference type="PROSITE" id="PS50885">
    <property type="entry name" value="HAMP"/>
    <property type="match status" value="1"/>
</dbReference>
<keyword id="KW-1003">Cell membrane</keyword>
<keyword id="KW-0145">Chemotaxis</keyword>
<keyword id="KW-0472">Membrane</keyword>
<keyword id="KW-0807">Transducer</keyword>
<keyword id="KW-0812">Transmembrane</keyword>
<keyword id="KW-1133">Transmembrane helix</keyword>
<reference key="1">
    <citation type="journal article" date="2008" name="Genomics">
        <title>Evolution in the laboratory: the genome of Halobacterium salinarum strain R1 compared to that of strain NRC-1.</title>
        <authorList>
            <person name="Pfeiffer F."/>
            <person name="Schuster S.C."/>
            <person name="Broicher A."/>
            <person name="Falb M."/>
            <person name="Palm P."/>
            <person name="Rodewald K."/>
            <person name="Ruepp A."/>
            <person name="Soppa J."/>
            <person name="Tittor J."/>
            <person name="Oesterhelt D."/>
        </authorList>
    </citation>
    <scope>NUCLEOTIDE SEQUENCE [LARGE SCALE GENOMIC DNA]</scope>
    <source>
        <strain>ATCC 29341 / DSM 671 / R1</strain>
    </source>
</reference>
<reference key="2">
    <citation type="journal article" date="2008" name="J. Mol. Biol.">
        <title>Physiological sites of deamidation and methyl esterification in sensory transducers of Halobacterium salinarum.</title>
        <authorList>
            <person name="Koch M.K."/>
            <person name="Staudinger W.F."/>
            <person name="Siedler F."/>
            <person name="Oesterhelt D."/>
        </authorList>
    </citation>
    <scope>METHYLATION</scope>
    <source>
        <strain>R1 / S9</strain>
    </source>
</reference>
<sequence>MGESARGGGSAETTGGLAAAVKTYLEYTPTGESIPAAAWRRRHRNVRVFVLAHIPLLLALGLYEGTESAVTGATIPPTPGILIAAELGIVGALVGLASIPSVSRRGRTALASTAVLASSVVLVQFSGGFIEAHFHFFVGMAVIAVYEDWLPFALGLVYVVFTHGVFGMINAERVYNHTAAINNPWVWGGIHGAFVLLLAGALMANWYSTERSREASQKRLEEARQKAQQVEDLEARQAEIEAEKAEAKRLKADAEEAREAAEAQQREVAALNERLEATANTYGAAMARAADGDLSVRLDPDVENDAMAAIAASFNEMLDETETTIREIQAVASDVAAASEDADAGVVEIEDASGQVSETVQEIAAGADEQREKLETVSGEMTDLSAAIEEVAASADSVAERSHETAAVAGDGEQTAEQAIADSRTVQSAVESTVQNVEALDDQLAEISEIVDLISDVAEQTNMLALNANIEAARADKSGDGFAVVADEVKDLAEETRASAGDIEALVADIDAQMQATVTEARTADESVQDAISAVDAVVDAFGTVAENAEETDTGVQEISTTTDDQAASTEEAVSMIAEVSDISTATAADAQQASTAAEQQTTAAATISENTAALREQADRLQGLVSTFDVHDESASTAARSE</sequence>
<comment type="function">
    <text evidence="1">Potentially involved in chemo- or phototactic signal transduction.</text>
</comment>
<comment type="subcellular location">
    <subcellularLocation>
        <location evidence="6">Cell membrane</location>
        <topology evidence="6">Multi-pass membrane protein</topology>
    </subcellularLocation>
</comment>
<comment type="PTM">
    <text evidence="5">Methylated by CheR.</text>
</comment>
<comment type="similarity">
    <text evidence="6">Belongs to the methyl-accepting chemotaxis (MCP) protein family.</text>
</comment>
<name>HTR8_HALS3</name>
<gene>
    <name type="primary">htr8</name>
    <name type="synonym">htrVIII</name>
    <name type="ordered locus">OE_3167F</name>
</gene>
<organism>
    <name type="scientific">Halobacterium salinarum (strain ATCC 29341 / DSM 671 / R1)</name>
    <dbReference type="NCBI Taxonomy" id="478009"/>
    <lineage>
        <taxon>Archaea</taxon>
        <taxon>Methanobacteriati</taxon>
        <taxon>Methanobacteriota</taxon>
        <taxon>Stenosarchaea group</taxon>
        <taxon>Halobacteria</taxon>
        <taxon>Halobacteriales</taxon>
        <taxon>Halobacteriaceae</taxon>
        <taxon>Halobacterium</taxon>
        <taxon>Halobacterium salinarum NRC-34001</taxon>
    </lineage>
</organism>
<evidence type="ECO:0000250" key="1"/>
<evidence type="ECO:0000255" key="2"/>
<evidence type="ECO:0000255" key="3">
    <source>
        <dbReference type="PROSITE-ProRule" id="PRU00102"/>
    </source>
</evidence>
<evidence type="ECO:0000255" key="4">
    <source>
        <dbReference type="PROSITE-ProRule" id="PRU00284"/>
    </source>
</evidence>
<evidence type="ECO:0000269" key="5">
    <source>
    </source>
</evidence>
<evidence type="ECO:0000305" key="6"/>
<protein>
    <recommendedName>
        <fullName>Transducer protein Htr8</fullName>
    </recommendedName>
</protein>
<proteinExistence type="evidence at protein level"/>